<organism>
    <name type="scientific">Rippkaea orientalis (strain PCC 8801 / RF-1)</name>
    <name type="common">Cyanothece sp. (strain PCC 8801)</name>
    <dbReference type="NCBI Taxonomy" id="41431"/>
    <lineage>
        <taxon>Bacteria</taxon>
        <taxon>Bacillati</taxon>
        <taxon>Cyanobacteriota</taxon>
        <taxon>Cyanophyceae</taxon>
        <taxon>Oscillatoriophycideae</taxon>
        <taxon>Chroococcales</taxon>
        <taxon>Aphanothecaceae</taxon>
        <taxon>Rippkaea</taxon>
        <taxon>Rippkaea orientalis</taxon>
    </lineage>
</organism>
<protein>
    <recommendedName>
        <fullName evidence="1">Anhydro-N-acetylmuramic acid kinase</fullName>
        <ecNumber evidence="1">2.7.1.170</ecNumber>
    </recommendedName>
    <alternativeName>
        <fullName evidence="1">AnhMurNAc kinase</fullName>
    </alternativeName>
</protein>
<gene>
    <name evidence="1" type="primary">anmK</name>
    <name type="ordered locus">PCC8801_2235</name>
</gene>
<sequence length="384" mass="41695">MYCIGLISGTSVDGIDAALIEISGTELDLKIDLISGKTYPYPPELRGKIIEICGGKPISIEELAQIDDAIAQSFAQAAIMVQNGHPHAQLIGSHGQTVFHRPPVLGEREIKLGYSLQLGRGSMIAHLTGIPTVSNFRAADIAAGGQAAPLVPKVDAYLLSHPTHHRCVQNIGGIGNVTYLPPNQKPNWEQAVRGWDTGPGNVLIDLAIQKLTNGQQTYDNNGQWAAQGTPCESLVRKWLEQEFFQQTPPKSTGRELFSPAYLEQCWQDAQPYHLSDSDWLATLTELTAASIAQSYQQFIKAPIDEILVCGGGSRNTYLKQRLANYLPNSQILTTDDLGISSDFKEAIAFGVLAYWRLVCGITGNLPQVTGAKQAMLLGDIDHPV</sequence>
<evidence type="ECO:0000255" key="1">
    <source>
        <dbReference type="HAMAP-Rule" id="MF_01270"/>
    </source>
</evidence>
<feature type="chain" id="PRO_1000214165" description="Anhydro-N-acetylmuramic acid kinase">
    <location>
        <begin position="1"/>
        <end position="384"/>
    </location>
</feature>
<feature type="binding site" evidence="1">
    <location>
        <begin position="9"/>
        <end position="16"/>
    </location>
    <ligand>
        <name>ATP</name>
        <dbReference type="ChEBI" id="CHEBI:30616"/>
    </ligand>
</feature>
<proteinExistence type="inferred from homology"/>
<reference key="1">
    <citation type="journal article" date="2011" name="MBio">
        <title>Novel metabolic attributes of the genus Cyanothece, comprising a group of unicellular nitrogen-fixing Cyanobacteria.</title>
        <authorList>
            <person name="Bandyopadhyay A."/>
            <person name="Elvitigala T."/>
            <person name="Welsh E."/>
            <person name="Stockel J."/>
            <person name="Liberton M."/>
            <person name="Min H."/>
            <person name="Sherman L.A."/>
            <person name="Pakrasi H.B."/>
        </authorList>
    </citation>
    <scope>NUCLEOTIDE SEQUENCE [LARGE SCALE GENOMIC DNA]</scope>
    <source>
        <strain>PCC 8801 / RF-1</strain>
    </source>
</reference>
<dbReference type="EC" id="2.7.1.170" evidence="1"/>
<dbReference type="EMBL" id="CP001287">
    <property type="protein sequence ID" value="ACK66260.1"/>
    <property type="molecule type" value="Genomic_DNA"/>
</dbReference>
<dbReference type="RefSeq" id="WP_012595528.1">
    <property type="nucleotide sequence ID" value="NC_011726.1"/>
</dbReference>
<dbReference type="SMR" id="B7K165"/>
<dbReference type="STRING" id="41431.PCC8801_2235"/>
<dbReference type="KEGG" id="cyp:PCC8801_2235"/>
<dbReference type="eggNOG" id="COG2377">
    <property type="taxonomic scope" value="Bacteria"/>
</dbReference>
<dbReference type="HOGENOM" id="CLU_038782_1_0_3"/>
<dbReference type="OrthoDB" id="9763949at2"/>
<dbReference type="UniPathway" id="UPA00343"/>
<dbReference type="UniPathway" id="UPA00544"/>
<dbReference type="Proteomes" id="UP000008204">
    <property type="component" value="Chromosome"/>
</dbReference>
<dbReference type="GO" id="GO:0005524">
    <property type="term" value="F:ATP binding"/>
    <property type="evidence" value="ECO:0007669"/>
    <property type="project" value="UniProtKB-UniRule"/>
</dbReference>
<dbReference type="GO" id="GO:0016301">
    <property type="term" value="F:kinase activity"/>
    <property type="evidence" value="ECO:0007669"/>
    <property type="project" value="UniProtKB-KW"/>
</dbReference>
<dbReference type="GO" id="GO:0016773">
    <property type="term" value="F:phosphotransferase activity, alcohol group as acceptor"/>
    <property type="evidence" value="ECO:0007669"/>
    <property type="project" value="UniProtKB-UniRule"/>
</dbReference>
<dbReference type="GO" id="GO:0097175">
    <property type="term" value="P:1,6-anhydro-N-acetyl-beta-muramic acid catabolic process"/>
    <property type="evidence" value="ECO:0007669"/>
    <property type="project" value="UniProtKB-UniRule"/>
</dbReference>
<dbReference type="GO" id="GO:0006040">
    <property type="term" value="P:amino sugar metabolic process"/>
    <property type="evidence" value="ECO:0007669"/>
    <property type="project" value="InterPro"/>
</dbReference>
<dbReference type="GO" id="GO:0009254">
    <property type="term" value="P:peptidoglycan turnover"/>
    <property type="evidence" value="ECO:0007669"/>
    <property type="project" value="UniProtKB-UniRule"/>
</dbReference>
<dbReference type="CDD" id="cd24050">
    <property type="entry name" value="ASKHA_NBD_ANMK"/>
    <property type="match status" value="1"/>
</dbReference>
<dbReference type="Gene3D" id="3.30.420.40">
    <property type="match status" value="2"/>
</dbReference>
<dbReference type="HAMAP" id="MF_01270">
    <property type="entry name" value="AnhMurNAc_kinase"/>
    <property type="match status" value="1"/>
</dbReference>
<dbReference type="InterPro" id="IPR005338">
    <property type="entry name" value="Anhydro_N_Ac-Mur_kinase"/>
</dbReference>
<dbReference type="InterPro" id="IPR043129">
    <property type="entry name" value="ATPase_NBD"/>
</dbReference>
<dbReference type="NCBIfam" id="NF007143">
    <property type="entry name" value="PRK09585.2-2"/>
    <property type="match status" value="1"/>
</dbReference>
<dbReference type="NCBIfam" id="NF007148">
    <property type="entry name" value="PRK09585.3-2"/>
    <property type="match status" value="1"/>
</dbReference>
<dbReference type="PANTHER" id="PTHR30605">
    <property type="entry name" value="ANHYDRO-N-ACETYLMURAMIC ACID KINASE"/>
    <property type="match status" value="1"/>
</dbReference>
<dbReference type="PANTHER" id="PTHR30605:SF0">
    <property type="entry name" value="ANHYDRO-N-ACETYLMURAMIC ACID KINASE"/>
    <property type="match status" value="1"/>
</dbReference>
<dbReference type="Pfam" id="PF03702">
    <property type="entry name" value="AnmK"/>
    <property type="match status" value="1"/>
</dbReference>
<dbReference type="SUPFAM" id="SSF53067">
    <property type="entry name" value="Actin-like ATPase domain"/>
    <property type="match status" value="1"/>
</dbReference>
<name>ANMK_RIPO1</name>
<accession>B7K165</accession>
<keyword id="KW-0067">ATP-binding</keyword>
<keyword id="KW-0119">Carbohydrate metabolism</keyword>
<keyword id="KW-0418">Kinase</keyword>
<keyword id="KW-0547">Nucleotide-binding</keyword>
<keyword id="KW-1185">Reference proteome</keyword>
<keyword id="KW-0808">Transferase</keyword>
<comment type="function">
    <text evidence="1">Catalyzes the specific phosphorylation of 1,6-anhydro-N-acetylmuramic acid (anhMurNAc) with the simultaneous cleavage of the 1,6-anhydro ring, generating MurNAc-6-P. Is required for the utilization of anhMurNAc either imported from the medium or derived from its own cell wall murein, and thus plays a role in cell wall recycling.</text>
</comment>
<comment type="catalytic activity">
    <reaction evidence="1">
        <text>1,6-anhydro-N-acetyl-beta-muramate + ATP + H2O = N-acetyl-D-muramate 6-phosphate + ADP + H(+)</text>
        <dbReference type="Rhea" id="RHEA:24952"/>
        <dbReference type="ChEBI" id="CHEBI:15377"/>
        <dbReference type="ChEBI" id="CHEBI:15378"/>
        <dbReference type="ChEBI" id="CHEBI:30616"/>
        <dbReference type="ChEBI" id="CHEBI:58690"/>
        <dbReference type="ChEBI" id="CHEBI:58722"/>
        <dbReference type="ChEBI" id="CHEBI:456216"/>
        <dbReference type="EC" id="2.7.1.170"/>
    </reaction>
</comment>
<comment type="pathway">
    <text evidence="1">Amino-sugar metabolism; 1,6-anhydro-N-acetylmuramate degradation.</text>
</comment>
<comment type="pathway">
    <text evidence="1">Cell wall biogenesis; peptidoglycan recycling.</text>
</comment>
<comment type="similarity">
    <text evidence="1">Belongs to the anhydro-N-acetylmuramic acid kinase family.</text>
</comment>